<evidence type="ECO:0000255" key="1"/>
<evidence type="ECO:0000256" key="2">
    <source>
        <dbReference type="SAM" id="MobiDB-lite"/>
    </source>
</evidence>
<evidence type="ECO:0000269" key="3">
    <source>
    </source>
</evidence>
<evidence type="ECO:0000269" key="4">
    <source>
    </source>
</evidence>
<evidence type="ECO:0000305" key="5"/>
<organism>
    <name type="scientific">Arabidopsis thaliana</name>
    <name type="common">Mouse-ear cress</name>
    <dbReference type="NCBI Taxonomy" id="3702"/>
    <lineage>
        <taxon>Eukaryota</taxon>
        <taxon>Viridiplantae</taxon>
        <taxon>Streptophyta</taxon>
        <taxon>Embryophyta</taxon>
        <taxon>Tracheophyta</taxon>
        <taxon>Spermatophyta</taxon>
        <taxon>Magnoliopsida</taxon>
        <taxon>eudicotyledons</taxon>
        <taxon>Gunneridae</taxon>
        <taxon>Pentapetalae</taxon>
        <taxon>rosids</taxon>
        <taxon>malvids</taxon>
        <taxon>Brassicales</taxon>
        <taxon>Brassicaceae</taxon>
        <taxon>Camelineae</taxon>
        <taxon>Arabidopsis</taxon>
    </lineage>
</organism>
<reference key="1">
    <citation type="journal article" date="2000" name="Nature">
        <title>Sequence and analysis of chromosome 3 of the plant Arabidopsis thaliana.</title>
        <authorList>
            <person name="Salanoubat M."/>
            <person name="Lemcke K."/>
            <person name="Rieger M."/>
            <person name="Ansorge W."/>
            <person name="Unseld M."/>
            <person name="Fartmann B."/>
            <person name="Valle G."/>
            <person name="Bloecker H."/>
            <person name="Perez-Alonso M."/>
            <person name="Obermaier B."/>
            <person name="Delseny M."/>
            <person name="Boutry M."/>
            <person name="Grivell L.A."/>
            <person name="Mache R."/>
            <person name="Puigdomenech P."/>
            <person name="De Simone V."/>
            <person name="Choisne N."/>
            <person name="Artiguenave F."/>
            <person name="Robert C."/>
            <person name="Brottier P."/>
            <person name="Wincker P."/>
            <person name="Cattolico L."/>
            <person name="Weissenbach J."/>
            <person name="Saurin W."/>
            <person name="Quetier F."/>
            <person name="Schaefer M."/>
            <person name="Mueller-Auer S."/>
            <person name="Gabel C."/>
            <person name="Fuchs M."/>
            <person name="Benes V."/>
            <person name="Wurmbach E."/>
            <person name="Drzonek H."/>
            <person name="Erfle H."/>
            <person name="Jordan N."/>
            <person name="Bangert S."/>
            <person name="Wiedelmann R."/>
            <person name="Kranz H."/>
            <person name="Voss H."/>
            <person name="Holland R."/>
            <person name="Brandt P."/>
            <person name="Nyakatura G."/>
            <person name="Vezzi A."/>
            <person name="D'Angelo M."/>
            <person name="Pallavicini A."/>
            <person name="Toppo S."/>
            <person name="Simionati B."/>
            <person name="Conrad A."/>
            <person name="Hornischer K."/>
            <person name="Kauer G."/>
            <person name="Loehnert T.-H."/>
            <person name="Nordsiek G."/>
            <person name="Reichelt J."/>
            <person name="Scharfe M."/>
            <person name="Schoen O."/>
            <person name="Bargues M."/>
            <person name="Terol J."/>
            <person name="Climent J."/>
            <person name="Navarro P."/>
            <person name="Collado C."/>
            <person name="Perez-Perez A."/>
            <person name="Ottenwaelder B."/>
            <person name="Duchemin D."/>
            <person name="Cooke R."/>
            <person name="Laudie M."/>
            <person name="Berger-Llauro C."/>
            <person name="Purnelle B."/>
            <person name="Masuy D."/>
            <person name="de Haan M."/>
            <person name="Maarse A.C."/>
            <person name="Alcaraz J.-P."/>
            <person name="Cottet A."/>
            <person name="Casacuberta E."/>
            <person name="Monfort A."/>
            <person name="Argiriou A."/>
            <person name="Flores M."/>
            <person name="Liguori R."/>
            <person name="Vitale D."/>
            <person name="Mannhaupt G."/>
            <person name="Haase D."/>
            <person name="Schoof H."/>
            <person name="Rudd S."/>
            <person name="Zaccaria P."/>
            <person name="Mewes H.-W."/>
            <person name="Mayer K.F.X."/>
            <person name="Kaul S."/>
            <person name="Town C.D."/>
            <person name="Koo H.L."/>
            <person name="Tallon L.J."/>
            <person name="Jenkins J."/>
            <person name="Rooney T."/>
            <person name="Rizzo M."/>
            <person name="Walts A."/>
            <person name="Utterback T."/>
            <person name="Fujii C.Y."/>
            <person name="Shea T.P."/>
            <person name="Creasy T.H."/>
            <person name="Haas B."/>
            <person name="Maiti R."/>
            <person name="Wu D."/>
            <person name="Peterson J."/>
            <person name="Van Aken S."/>
            <person name="Pai G."/>
            <person name="Militscher J."/>
            <person name="Sellers P."/>
            <person name="Gill J.E."/>
            <person name="Feldblyum T.V."/>
            <person name="Preuss D."/>
            <person name="Lin X."/>
            <person name="Nierman W.C."/>
            <person name="Salzberg S.L."/>
            <person name="White O."/>
            <person name="Venter J.C."/>
            <person name="Fraser C.M."/>
            <person name="Kaneko T."/>
            <person name="Nakamura Y."/>
            <person name="Sato S."/>
            <person name="Kato T."/>
            <person name="Asamizu E."/>
            <person name="Sasamoto S."/>
            <person name="Kimura T."/>
            <person name="Idesawa K."/>
            <person name="Kawashima K."/>
            <person name="Kishida Y."/>
            <person name="Kiyokawa C."/>
            <person name="Kohara M."/>
            <person name="Matsumoto M."/>
            <person name="Matsuno A."/>
            <person name="Muraki A."/>
            <person name="Nakayama S."/>
            <person name="Nakazaki N."/>
            <person name="Shinpo S."/>
            <person name="Takeuchi C."/>
            <person name="Wada T."/>
            <person name="Watanabe A."/>
            <person name="Yamada M."/>
            <person name="Yasuda M."/>
            <person name="Tabata S."/>
        </authorList>
    </citation>
    <scope>NUCLEOTIDE SEQUENCE [LARGE SCALE GENOMIC DNA]</scope>
    <source>
        <strain>cv. Columbia</strain>
    </source>
</reference>
<reference key="2">
    <citation type="journal article" date="2017" name="Plant J.">
        <title>Araport11: a complete reannotation of the Arabidopsis thaliana reference genome.</title>
        <authorList>
            <person name="Cheng C.Y."/>
            <person name="Krishnakumar V."/>
            <person name="Chan A.P."/>
            <person name="Thibaud-Nissen F."/>
            <person name="Schobel S."/>
            <person name="Town C.D."/>
        </authorList>
    </citation>
    <scope>GENOME REANNOTATION</scope>
    <source>
        <strain>cv. Columbia</strain>
    </source>
</reference>
<reference key="3">
    <citation type="journal article" date="2003" name="Science">
        <title>Empirical analysis of transcriptional activity in the Arabidopsis genome.</title>
        <authorList>
            <person name="Yamada K."/>
            <person name="Lim J."/>
            <person name="Dale J.M."/>
            <person name="Chen H."/>
            <person name="Shinn P."/>
            <person name="Palm C.J."/>
            <person name="Southwick A.M."/>
            <person name="Wu H.C."/>
            <person name="Kim C.J."/>
            <person name="Nguyen M."/>
            <person name="Pham P.K."/>
            <person name="Cheuk R.F."/>
            <person name="Karlin-Newmann G."/>
            <person name="Liu S.X."/>
            <person name="Lam B."/>
            <person name="Sakano H."/>
            <person name="Wu T."/>
            <person name="Yu G."/>
            <person name="Miranda M."/>
            <person name="Quach H.L."/>
            <person name="Tripp M."/>
            <person name="Chang C.H."/>
            <person name="Lee J.M."/>
            <person name="Toriumi M.J."/>
            <person name="Chan M.M."/>
            <person name="Tang C.C."/>
            <person name="Onodera C.S."/>
            <person name="Deng J.M."/>
            <person name="Akiyama K."/>
            <person name="Ansari Y."/>
            <person name="Arakawa T."/>
            <person name="Banh J."/>
            <person name="Banno F."/>
            <person name="Bowser L."/>
            <person name="Brooks S.Y."/>
            <person name="Carninci P."/>
            <person name="Chao Q."/>
            <person name="Choy N."/>
            <person name="Enju A."/>
            <person name="Goldsmith A.D."/>
            <person name="Gurjal M."/>
            <person name="Hansen N.F."/>
            <person name="Hayashizaki Y."/>
            <person name="Johnson-Hopson C."/>
            <person name="Hsuan V.W."/>
            <person name="Iida K."/>
            <person name="Karnes M."/>
            <person name="Khan S."/>
            <person name="Koesema E."/>
            <person name="Ishida J."/>
            <person name="Jiang P.X."/>
            <person name="Jones T."/>
            <person name="Kawai J."/>
            <person name="Kamiya A."/>
            <person name="Meyers C."/>
            <person name="Nakajima M."/>
            <person name="Narusaka M."/>
            <person name="Seki M."/>
            <person name="Sakurai T."/>
            <person name="Satou M."/>
            <person name="Tamse R."/>
            <person name="Vaysberg M."/>
            <person name="Wallender E.K."/>
            <person name="Wong C."/>
            <person name="Yamamura Y."/>
            <person name="Yuan S."/>
            <person name="Shinozaki K."/>
            <person name="Davis R.W."/>
            <person name="Theologis A."/>
            <person name="Ecker J.R."/>
        </authorList>
    </citation>
    <scope>NUCLEOTIDE SEQUENCE [LARGE SCALE MRNA]</scope>
    <source>
        <strain>cv. Columbia</strain>
    </source>
</reference>
<reference key="4">
    <citation type="journal article" date="2003" name="Plant Mol. Biol.">
        <title>Identification of a copper transporter family in Arabidopsis thaliana.</title>
        <authorList>
            <person name="Sancenon V."/>
            <person name="Puig S."/>
            <person name="Mira H."/>
            <person name="Thiele D.J."/>
            <person name="Penarrubia L."/>
        </authorList>
    </citation>
    <scope>FUNCTION</scope>
    <scope>TISSUE SPECIFICITY</scope>
    <scope>INDUCTION</scope>
    <scope>GENE FAMILY</scope>
    <scope>NOMENCLATURE</scope>
</reference>
<reference key="5">
    <citation type="journal article" date="2010" name="Biochem. Biophys. Res. Commun.">
        <title>Gene expression profiling analysis of copper homeostasis in Arabidopsis thaliana.</title>
        <authorList>
            <person name="del Pozo T."/>
            <person name="Cambiazo V."/>
            <person name="Gonzalez M."/>
        </authorList>
    </citation>
    <scope>INDUCTION</scope>
</reference>
<protein>
    <recommendedName>
        <fullName>Copper transporter 2</fullName>
        <shortName>AtCOPT2</shortName>
    </recommendedName>
</protein>
<name>COPT2_ARATH</name>
<gene>
    <name type="primary">COPT2</name>
    <name type="ordered locus">At3g46900</name>
    <name type="ORF">T6H20.70</name>
</gene>
<sequence length="158" mass="17058">MDHDHMHDMPPPSPSSSSMSNHTTPHMMMMHMTFFWGKNTEVLFSGWPGTSSGMYALCLIVIFLLAVIAEWLAHSPILRVSGSTNRAAGLAQTAVYTLKTGLSYLVMLAVMSFNAGVFIVAIAGYGVGFFLFGSTTFKKPSDDQKTAELLPPSSGCVC</sequence>
<feature type="chain" id="PRO_0000399993" description="Copper transporter 2">
    <location>
        <begin position="1"/>
        <end position="158"/>
    </location>
</feature>
<feature type="transmembrane region" description="Helical" evidence="1">
    <location>
        <begin position="53"/>
        <end position="73"/>
    </location>
</feature>
<feature type="transmembrane region" description="Helical" evidence="1">
    <location>
        <begin position="104"/>
        <end position="124"/>
    </location>
</feature>
<feature type="region of interest" description="Disordered" evidence="2">
    <location>
        <begin position="1"/>
        <end position="20"/>
    </location>
</feature>
<accession>Q9STG2</accession>
<comment type="function">
    <text evidence="3">Involved in the transport of copper.</text>
</comment>
<comment type="subcellular location">
    <subcellularLocation>
        <location evidence="5">Membrane</location>
        <topology evidence="5">Multi-pass membrane protein</topology>
    </subcellularLocation>
</comment>
<comment type="tissue specificity">
    <text evidence="3">Highly expressed in leaves and at lower levels in roots, stems and flowers.</text>
</comment>
<comment type="induction">
    <text evidence="3 4">By copper deficiency. Down-regulated by treatment with high concentrations of copper.</text>
</comment>
<comment type="similarity">
    <text evidence="5">Belongs to the copper transporter (Ctr) (TC 1.A.56) family. SLC31A subfamily.</text>
</comment>
<dbReference type="EMBL" id="AL096859">
    <property type="protein sequence ID" value="CAB51175.1"/>
    <property type="molecule type" value="Genomic_DNA"/>
</dbReference>
<dbReference type="EMBL" id="CP002686">
    <property type="protein sequence ID" value="AEE78216.1"/>
    <property type="molecule type" value="Genomic_DNA"/>
</dbReference>
<dbReference type="EMBL" id="AF466370">
    <property type="protein sequence ID" value="AAL74262.1"/>
    <property type="molecule type" value="mRNA"/>
</dbReference>
<dbReference type="EMBL" id="BT009708">
    <property type="protein sequence ID" value="AAP88342.1"/>
    <property type="molecule type" value="mRNA"/>
</dbReference>
<dbReference type="PIR" id="T12958">
    <property type="entry name" value="T12958"/>
</dbReference>
<dbReference type="RefSeq" id="NP_190274.1">
    <property type="nucleotide sequence ID" value="NM_114557.3"/>
</dbReference>
<dbReference type="SMR" id="Q9STG2"/>
<dbReference type="BioGRID" id="9163">
    <property type="interactions" value="12"/>
</dbReference>
<dbReference type="FunCoup" id="Q9STG2">
    <property type="interactions" value="1249"/>
</dbReference>
<dbReference type="IntAct" id="Q9STG2">
    <property type="interactions" value="10"/>
</dbReference>
<dbReference type="STRING" id="3702.Q9STG2"/>
<dbReference type="PaxDb" id="3702-AT3G46900.1"/>
<dbReference type="ProteomicsDB" id="241170"/>
<dbReference type="EnsemblPlants" id="AT3G46900.1">
    <property type="protein sequence ID" value="AT3G46900.1"/>
    <property type="gene ID" value="AT3G46900"/>
</dbReference>
<dbReference type="GeneID" id="823843"/>
<dbReference type="Gramene" id="AT3G46900.1">
    <property type="protein sequence ID" value="AT3G46900.1"/>
    <property type="gene ID" value="AT3G46900"/>
</dbReference>
<dbReference type="KEGG" id="ath:AT3G46900"/>
<dbReference type="Araport" id="AT3G46900"/>
<dbReference type="TAIR" id="AT3G46900">
    <property type="gene designation" value="COPT2"/>
</dbReference>
<dbReference type="eggNOG" id="KOG3386">
    <property type="taxonomic scope" value="Eukaryota"/>
</dbReference>
<dbReference type="HOGENOM" id="CLU_079690_1_2_1"/>
<dbReference type="InParanoid" id="Q9STG2"/>
<dbReference type="OMA" id="PHMMMMH"/>
<dbReference type="OrthoDB" id="73901at2759"/>
<dbReference type="PhylomeDB" id="Q9STG2"/>
<dbReference type="PRO" id="PR:Q9STG2"/>
<dbReference type="Proteomes" id="UP000006548">
    <property type="component" value="Chromosome 3"/>
</dbReference>
<dbReference type="ExpressionAtlas" id="Q9STG2">
    <property type="expression patterns" value="baseline and differential"/>
</dbReference>
<dbReference type="GO" id="GO:0016020">
    <property type="term" value="C:membrane"/>
    <property type="evidence" value="ECO:0007669"/>
    <property type="project" value="UniProtKB-SubCell"/>
</dbReference>
<dbReference type="GO" id="GO:0015089">
    <property type="term" value="F:high-affinity copper ion transmembrane transporter activity"/>
    <property type="evidence" value="ECO:0000316"/>
    <property type="project" value="TAIR"/>
</dbReference>
<dbReference type="GO" id="GO:0098705">
    <property type="term" value="P:copper ion import across plasma membrane"/>
    <property type="evidence" value="ECO:0000316"/>
    <property type="project" value="TAIR"/>
</dbReference>
<dbReference type="InterPro" id="IPR007274">
    <property type="entry name" value="Cop_transporter"/>
</dbReference>
<dbReference type="PANTHER" id="PTHR12483:SF24">
    <property type="entry name" value="COPPER TRANSPORTER 2-RELATED"/>
    <property type="match status" value="1"/>
</dbReference>
<dbReference type="PANTHER" id="PTHR12483">
    <property type="entry name" value="SOLUTE CARRIER FAMILY 31 COPPER TRANSPORTERS"/>
    <property type="match status" value="1"/>
</dbReference>
<dbReference type="Pfam" id="PF04145">
    <property type="entry name" value="Ctr"/>
    <property type="match status" value="2"/>
</dbReference>
<keyword id="KW-0186">Copper</keyword>
<keyword id="KW-0187">Copper transport</keyword>
<keyword id="KW-0406">Ion transport</keyword>
<keyword id="KW-0472">Membrane</keyword>
<keyword id="KW-1185">Reference proteome</keyword>
<keyword id="KW-0812">Transmembrane</keyword>
<keyword id="KW-1133">Transmembrane helix</keyword>
<keyword id="KW-0813">Transport</keyword>
<proteinExistence type="evidence at transcript level"/>